<feature type="chain" id="PRO_0000430768" description="Protein TylM3">
    <location>
        <begin position="1"/>
        <end position="423"/>
    </location>
</feature>
<feature type="region of interest" description="Disordered" evidence="1">
    <location>
        <begin position="1"/>
        <end position="26"/>
    </location>
</feature>
<feature type="region of interest" description="Disordered" evidence="1">
    <location>
        <begin position="117"/>
        <end position="149"/>
    </location>
</feature>
<feature type="compositionally biased region" description="Low complexity" evidence="1">
    <location>
        <begin position="1"/>
        <end position="21"/>
    </location>
</feature>
<feature type="compositionally biased region" description="Basic and acidic residues" evidence="1">
    <location>
        <begin position="139"/>
        <end position="149"/>
    </location>
</feature>
<name>TYLM3_STRFR</name>
<protein>
    <recommendedName>
        <fullName evidence="3">Protein TylM3</fullName>
    </recommendedName>
</protein>
<organism>
    <name type="scientific">Streptomyces fradiae</name>
    <name type="common">Streptomyces roseoflavus</name>
    <dbReference type="NCBI Taxonomy" id="1906"/>
    <lineage>
        <taxon>Bacteria</taxon>
        <taxon>Bacillati</taxon>
        <taxon>Actinomycetota</taxon>
        <taxon>Actinomycetes</taxon>
        <taxon>Kitasatosporales</taxon>
        <taxon>Streptomycetaceae</taxon>
        <taxon>Streptomyces</taxon>
    </lineage>
</organism>
<comment type="function">
    <text evidence="2 4">Involved in the biosynthesis of the macrolide antibiotic tylosin derived from the polyketide lactone tylactone. TylM3 is required for the glycosylation of the 5-hydroxyl group of tylactone to yield 5-O-mycaminosytylactone.</text>
</comment>
<comment type="pathway">
    <text evidence="4">Antibiotic biosynthesis; tylosin biosynthesis.</text>
</comment>
<comment type="similarity">
    <text evidence="6">Belongs to the cytochrome P450 family.</text>
</comment>
<comment type="caution">
    <text evidence="6">Although TylM3 shows significant similarity to cytochrome P450 family, it lacks the heme-binding sites. The conservation of amino acid sequence is confined primarily to the C-terminal half of the protein.</text>
</comment>
<keyword id="KW-0045">Antibiotic biosynthesis</keyword>
<gene>
    <name evidence="3" type="primary">tylMIII</name>
    <name evidence="5" type="ordered locus">SFRA_32290</name>
</gene>
<proteinExistence type="inferred from homology"/>
<reference key="1">
    <citation type="journal article" date="1997" name="Gene">
        <title>Analysis of four tylosin biosynthetic genes from the tylLM region of Streptomyces fradiae.</title>
        <authorList>
            <person name="Gandecha A.R."/>
            <person name="Large S.L."/>
            <person name="Cundliffe E."/>
        </authorList>
    </citation>
    <scope>NUCLEOTIDE SEQUENCE [GENOMIC DNA]</scope>
    <scope>FUNCTION</scope>
    <scope>PATHWAY</scope>
    <source>
        <strain>T59235</strain>
    </source>
</reference>
<reference key="2">
    <citation type="submission" date="2014-05" db="EMBL/GenBank/DDBJ databases">
        <title>Genome sequence of Streptomyces fradiae ATCC 19609.</title>
        <authorList>
            <person name="Bekker O.B."/>
            <person name="Klimina K.M."/>
            <person name="Vatlin A.A."/>
            <person name="Zakharevich N.V."/>
            <person name="Danilenko V.N."/>
        </authorList>
    </citation>
    <scope>NUCLEOTIDE SEQUENCE [LARGE SCALE GENOMIC DNA]</scope>
    <source>
        <strain>ATCC 19609</strain>
    </source>
</reference>
<reference key="3">
    <citation type="journal article" date="2004" name="J. Am. Chem. Soc.">
        <title>Characterization of tylM3/tylM2 and mydC/mycB pairs required for efficient glycosyltransfer in macrolide antibiotic biosynthesis.</title>
        <authorList>
            <person name="Melancon C.E. III"/>
            <person name="Takahashi H."/>
            <person name="Liu H.W."/>
        </authorList>
    </citation>
    <scope>FUNCTION</scope>
</reference>
<dbReference type="EMBL" id="X81885">
    <property type="protein sequence ID" value="CAA57471.1"/>
    <property type="molecule type" value="Genomic_DNA"/>
</dbReference>
<dbReference type="EMBL" id="JNAD01000108">
    <property type="protein sequence ID" value="KDS83993.1"/>
    <property type="molecule type" value="Genomic_DNA"/>
</dbReference>
<dbReference type="RefSeq" id="WP_050364680.1">
    <property type="nucleotide sequence ID" value="NZ_LGSP01000138.1"/>
</dbReference>
<dbReference type="SMR" id="P95746"/>
<dbReference type="STRING" id="1906.SFRA_32290"/>
<dbReference type="KEGG" id="ag:CAA57471"/>
<dbReference type="eggNOG" id="COG2124">
    <property type="taxonomic scope" value="Bacteria"/>
</dbReference>
<dbReference type="BioCyc" id="MetaCyc:MONOMER-18409"/>
<dbReference type="UniPathway" id="UPA01018"/>
<dbReference type="GO" id="GO:0036199">
    <property type="term" value="F:cholest-4-en-3-one 26-monooxygenase activity"/>
    <property type="evidence" value="ECO:0007669"/>
    <property type="project" value="TreeGrafter"/>
</dbReference>
<dbReference type="GO" id="GO:0008395">
    <property type="term" value="F:steroid hydroxylase activity"/>
    <property type="evidence" value="ECO:0007669"/>
    <property type="project" value="TreeGrafter"/>
</dbReference>
<dbReference type="GO" id="GO:0017000">
    <property type="term" value="P:antibiotic biosynthetic process"/>
    <property type="evidence" value="ECO:0007669"/>
    <property type="project" value="UniProtKB-KW"/>
</dbReference>
<dbReference type="GO" id="GO:0006707">
    <property type="term" value="P:cholesterol catabolic process"/>
    <property type="evidence" value="ECO:0007669"/>
    <property type="project" value="TreeGrafter"/>
</dbReference>
<dbReference type="CDD" id="cd11036">
    <property type="entry name" value="AknT-like"/>
    <property type="match status" value="1"/>
</dbReference>
<dbReference type="Gene3D" id="1.10.630.10">
    <property type="entry name" value="Cytochrome P450"/>
    <property type="match status" value="1"/>
</dbReference>
<dbReference type="InterPro" id="IPR002397">
    <property type="entry name" value="Cyt_P450_B"/>
</dbReference>
<dbReference type="InterPro" id="IPR036396">
    <property type="entry name" value="Cyt_P450_sf"/>
</dbReference>
<dbReference type="InterPro" id="IPR030958">
    <property type="entry name" value="P450-rel_GT_act"/>
</dbReference>
<dbReference type="NCBIfam" id="TIGR04515">
    <property type="entry name" value="P450_rel_GT_act"/>
    <property type="match status" value="1"/>
</dbReference>
<dbReference type="PANTHER" id="PTHR46696:SF4">
    <property type="entry name" value="BIOTIN BIOSYNTHESIS CYTOCHROME P450"/>
    <property type="match status" value="1"/>
</dbReference>
<dbReference type="PANTHER" id="PTHR46696">
    <property type="entry name" value="P450, PUTATIVE (EUROFUNG)-RELATED"/>
    <property type="match status" value="1"/>
</dbReference>
<dbReference type="PRINTS" id="PR00359">
    <property type="entry name" value="BP450"/>
</dbReference>
<dbReference type="SUPFAM" id="SSF48264">
    <property type="entry name" value="Cytochrome P450"/>
    <property type="match status" value="1"/>
</dbReference>
<sequence>MNTAAGPTGTAAGGTTAPAAAHDLSRAGRRLQLTRAAQWFAGNQGDPYGMILRAGTADPAPYEEEIRERGPLFHSELLGTWVTGSRHVADAVTADDAFGALTADGARPGVRELPLSGSALDAAHGNPGGPPLPGGWPHRPPDREERDDPDRHAADLLNAAGPGQVLDLVPFARRLAARTTGAWLGVPAERLPRFETALTGCRRALDALLCPQLLADARAGLAAEEALRAVLGETPEARGRPPGAVEAARAHAVSAAEPIAVLLCNAVRELMERPAQWRALTADPGLAGAAITETLLWAPPVRLESRVARETAVLAGRTLPAGTHLVVLAAAANRDACRNAGPAVTGFDVLRRASDGGPQPHGLPEDLHFRLSGPLVRRTAEAGLRALAERFPGLRPAGPAVRVRRSPVLRGLGRLPVAPYVPE</sequence>
<accession>P95746</accession>
<evidence type="ECO:0000256" key="1">
    <source>
        <dbReference type="SAM" id="MobiDB-lite"/>
    </source>
</evidence>
<evidence type="ECO:0000269" key="2">
    <source>
    </source>
</evidence>
<evidence type="ECO:0000303" key="3">
    <source>
    </source>
</evidence>
<evidence type="ECO:0000303" key="4">
    <source>
    </source>
</evidence>
<evidence type="ECO:0000303" key="5">
    <source ref="2"/>
</evidence>
<evidence type="ECO:0000305" key="6"/>